<organism>
    <name type="scientific">Xenopus laevis</name>
    <name type="common">African clawed frog</name>
    <dbReference type="NCBI Taxonomy" id="8355"/>
    <lineage>
        <taxon>Eukaryota</taxon>
        <taxon>Metazoa</taxon>
        <taxon>Chordata</taxon>
        <taxon>Craniata</taxon>
        <taxon>Vertebrata</taxon>
        <taxon>Euteleostomi</taxon>
        <taxon>Amphibia</taxon>
        <taxon>Batrachia</taxon>
        <taxon>Anura</taxon>
        <taxon>Pipoidea</taxon>
        <taxon>Pipidae</taxon>
        <taxon>Xenopodinae</taxon>
        <taxon>Xenopus</taxon>
        <taxon>Xenopus</taxon>
    </lineage>
</organism>
<name>UB22A_XENLA</name>
<comment type="function">
    <text evidence="1">Histone deubiquitinating component of the transcription regulatory histone acetylation (HAT) complex SAGA. Catalyzes the deubiquitination of both histones H2A and H2B, thereby acting as a coactivator. Recruited to specific gene promoters by activators, where it is required for transcription (By similarity).</text>
</comment>
<comment type="catalytic activity">
    <reaction>
        <text>Thiol-dependent hydrolysis of ester, thioester, amide, peptide and isopeptide bonds formed by the C-terminal Gly of ubiquitin (a 76-residue protein attached to proteins as an intracellular targeting signal).</text>
        <dbReference type="EC" id="3.4.19.12"/>
    </reaction>
</comment>
<comment type="subunit">
    <text evidence="1">Component of some SAGA transcription coactivator-HAT complexes.</text>
</comment>
<comment type="subcellular location">
    <subcellularLocation>
        <location evidence="2">Nucleus</location>
    </subcellularLocation>
</comment>
<comment type="similarity">
    <text evidence="6">Belongs to the peptidase C19 family. UBP8 subfamily.</text>
</comment>
<gene>
    <name type="primary">usp22-a</name>
</gene>
<keyword id="KW-0010">Activator</keyword>
<keyword id="KW-0131">Cell cycle</keyword>
<keyword id="KW-0156">Chromatin regulator</keyword>
<keyword id="KW-0378">Hydrolase</keyword>
<keyword id="KW-0479">Metal-binding</keyword>
<keyword id="KW-0539">Nucleus</keyword>
<keyword id="KW-0645">Protease</keyword>
<keyword id="KW-1185">Reference proteome</keyword>
<keyword id="KW-0788">Thiol protease</keyword>
<keyword id="KW-0804">Transcription</keyword>
<keyword id="KW-0805">Transcription regulation</keyword>
<keyword id="KW-0833">Ubl conjugation pathway</keyword>
<keyword id="KW-0862">Zinc</keyword>
<keyword id="KW-0863">Zinc-finger</keyword>
<reference key="1">
    <citation type="submission" date="2004-06" db="EMBL/GenBank/DDBJ databases">
        <authorList>
            <consortium name="NIH - Xenopus Gene Collection (XGC) project"/>
        </authorList>
    </citation>
    <scope>NUCLEOTIDE SEQUENCE [LARGE SCALE MRNA]</scope>
    <source>
        <tissue>Spleen</tissue>
    </source>
</reference>
<dbReference type="EC" id="3.4.19.12"/>
<dbReference type="EMBL" id="BC073524">
    <property type="protein sequence ID" value="AAH73524.1"/>
    <property type="molecule type" value="mRNA"/>
</dbReference>
<dbReference type="RefSeq" id="NP_001085912.1">
    <property type="nucleotide sequence ID" value="NM_001092443.1"/>
</dbReference>
<dbReference type="SMR" id="Q6GNI6"/>
<dbReference type="DNASU" id="444339"/>
<dbReference type="GeneID" id="444339"/>
<dbReference type="KEGG" id="xla:444339"/>
<dbReference type="AGR" id="Xenbase:XB-GENE-5806563"/>
<dbReference type="CTD" id="444339"/>
<dbReference type="Xenbase" id="XB-GENE-5806563">
    <property type="gene designation" value="usp22.L"/>
</dbReference>
<dbReference type="OrthoDB" id="47475at2759"/>
<dbReference type="Proteomes" id="UP000186698">
    <property type="component" value="Chromosome 9_10L"/>
</dbReference>
<dbReference type="Bgee" id="444339">
    <property type="expression patterns" value="Expressed in blastula and 19 other cell types or tissues"/>
</dbReference>
<dbReference type="GO" id="GO:0005634">
    <property type="term" value="C:nucleus"/>
    <property type="evidence" value="ECO:0007669"/>
    <property type="project" value="UniProtKB-SubCell"/>
</dbReference>
<dbReference type="GO" id="GO:0004843">
    <property type="term" value="F:cysteine-type deubiquitinase activity"/>
    <property type="evidence" value="ECO:0007669"/>
    <property type="project" value="UniProtKB-EC"/>
</dbReference>
<dbReference type="GO" id="GO:0008270">
    <property type="term" value="F:zinc ion binding"/>
    <property type="evidence" value="ECO:0007669"/>
    <property type="project" value="UniProtKB-KW"/>
</dbReference>
<dbReference type="GO" id="GO:0006325">
    <property type="term" value="P:chromatin organization"/>
    <property type="evidence" value="ECO:0007669"/>
    <property type="project" value="UniProtKB-KW"/>
</dbReference>
<dbReference type="GO" id="GO:0016579">
    <property type="term" value="P:protein deubiquitination"/>
    <property type="evidence" value="ECO:0007669"/>
    <property type="project" value="InterPro"/>
</dbReference>
<dbReference type="GO" id="GO:0006508">
    <property type="term" value="P:proteolysis"/>
    <property type="evidence" value="ECO:0007669"/>
    <property type="project" value="UniProtKB-KW"/>
</dbReference>
<dbReference type="CDD" id="cd02660">
    <property type="entry name" value="Peptidase_C19D"/>
    <property type="match status" value="1"/>
</dbReference>
<dbReference type="FunFam" id="3.30.40.10:FF:000141">
    <property type="entry name" value="Ubiquitinyl hydrolase 1"/>
    <property type="match status" value="1"/>
</dbReference>
<dbReference type="FunFam" id="3.90.70.10:FF:000011">
    <property type="entry name" value="Ubiquitinyl hydrolase 1"/>
    <property type="match status" value="1"/>
</dbReference>
<dbReference type="Gene3D" id="3.90.70.10">
    <property type="entry name" value="Cysteine proteinases"/>
    <property type="match status" value="1"/>
</dbReference>
<dbReference type="Gene3D" id="3.30.40.10">
    <property type="entry name" value="Zinc/RING finger domain, C3HC4 (zinc finger)"/>
    <property type="match status" value="1"/>
</dbReference>
<dbReference type="InterPro" id="IPR038765">
    <property type="entry name" value="Papain-like_cys_pep_sf"/>
</dbReference>
<dbReference type="InterPro" id="IPR001394">
    <property type="entry name" value="Peptidase_C19_UCH"/>
</dbReference>
<dbReference type="InterPro" id="IPR050185">
    <property type="entry name" value="Ub_carboxyl-term_hydrolase"/>
</dbReference>
<dbReference type="InterPro" id="IPR018200">
    <property type="entry name" value="USP_CS"/>
</dbReference>
<dbReference type="InterPro" id="IPR028889">
    <property type="entry name" value="USP_dom"/>
</dbReference>
<dbReference type="InterPro" id="IPR013083">
    <property type="entry name" value="Znf_RING/FYVE/PHD"/>
</dbReference>
<dbReference type="InterPro" id="IPR001607">
    <property type="entry name" value="Znf_UBP"/>
</dbReference>
<dbReference type="PANTHER" id="PTHR21646">
    <property type="entry name" value="UBIQUITIN CARBOXYL-TERMINAL HYDROLASE"/>
    <property type="match status" value="1"/>
</dbReference>
<dbReference type="PANTHER" id="PTHR21646:SF33">
    <property type="entry name" value="UBIQUITIN CARBOXYL-TERMINAL HYDROLASE 22"/>
    <property type="match status" value="1"/>
</dbReference>
<dbReference type="Pfam" id="PF00443">
    <property type="entry name" value="UCH"/>
    <property type="match status" value="1"/>
</dbReference>
<dbReference type="Pfam" id="PF02148">
    <property type="entry name" value="zf-UBP"/>
    <property type="match status" value="1"/>
</dbReference>
<dbReference type="SUPFAM" id="SSF54001">
    <property type="entry name" value="Cysteine proteinases"/>
    <property type="match status" value="1"/>
</dbReference>
<dbReference type="SUPFAM" id="SSF57850">
    <property type="entry name" value="RING/U-box"/>
    <property type="match status" value="1"/>
</dbReference>
<dbReference type="PROSITE" id="PS00972">
    <property type="entry name" value="USP_1"/>
    <property type="match status" value="1"/>
</dbReference>
<dbReference type="PROSITE" id="PS00973">
    <property type="entry name" value="USP_2"/>
    <property type="match status" value="1"/>
</dbReference>
<dbReference type="PROSITE" id="PS50235">
    <property type="entry name" value="USP_3"/>
    <property type="match status" value="1"/>
</dbReference>
<dbReference type="PROSITE" id="PS50271">
    <property type="entry name" value="ZF_UBP"/>
    <property type="match status" value="1"/>
</dbReference>
<proteinExistence type="evidence at transcript level"/>
<accession>Q6GNI6</accession>
<evidence type="ECO:0000250" key="1"/>
<evidence type="ECO:0000250" key="2">
    <source>
        <dbReference type="UniProtKB" id="Q5DU02"/>
    </source>
</evidence>
<evidence type="ECO:0000255" key="3">
    <source>
        <dbReference type="PROSITE-ProRule" id="PRU00502"/>
    </source>
</evidence>
<evidence type="ECO:0000255" key="4">
    <source>
        <dbReference type="PROSITE-ProRule" id="PRU10092"/>
    </source>
</evidence>
<evidence type="ECO:0000255" key="5">
    <source>
        <dbReference type="PROSITE-ProRule" id="PRU10093"/>
    </source>
</evidence>
<evidence type="ECO:0000305" key="6"/>
<sequence length="523" mass="60049">MSPAGCSHVNSFKVENWKQNLRVIYQCFVWSGTPETRKRKAKSCICHMCGAHLNRLHSCLYCVFFGCFTKKHIHEHAKNKRHNLAIDLLYGGIYCFMCQDYIYDKDMEQVAKEEQRKAWKLQVFSPALVSPYQYTMTGVGEKYSTWEPTKRELELLQHNPKRRKITTNCTIGLRGLINLGNTCFMNCIVQALTHTPLLRDFFLSDRHKCEMQSPNSCLVCEMSTLFQEFYSGHRSPHIPYRLLHLVWTHARHLAGYEQQDAHEFLIAALDVLHRHCKGDDNGKKANNPNHCNCIIDQIFTGGLQSDVTCQVCHGVSTTIDPFWDISLDLPGSSTPFWPLSPGSDAGVVNGESHVSGTTTLTDCLRRFTRPEHLGSSAKIKCSGCHSYQESTKQLTMKKLPIVACFHLKRFEHSAKLRRKITTYVSFPLELDMTPFMASSKESRMNGQYQQPSDSLHNDNKYSLFAVVNHQGTLESGHYTSFIRQHKDQWFKCDDAIITKASIKDVLDSEGYLLFYHKQFLEYE</sequence>
<protein>
    <recommendedName>
        <fullName>Ubiquitin carboxyl-terminal hydrolase 22-A</fullName>
        <ecNumber>3.4.19.12</ecNumber>
    </recommendedName>
    <alternativeName>
        <fullName>Deubiquitinating enzyme 22-A</fullName>
    </alternativeName>
    <alternativeName>
        <fullName>Ubiquitin thioesterase 22-A</fullName>
    </alternativeName>
    <alternativeName>
        <fullName>Ubiquitin-specific-processing protease 22-A</fullName>
    </alternativeName>
</protein>
<feature type="chain" id="PRO_0000367512" description="Ubiquitin carboxyl-terminal hydrolase 22-A">
    <location>
        <begin position="1"/>
        <end position="523"/>
    </location>
</feature>
<feature type="domain" description="USP">
    <location>
        <begin position="174"/>
        <end position="518"/>
    </location>
</feature>
<feature type="zinc finger region" description="UBP-type" evidence="3">
    <location>
        <begin position="4"/>
        <end position="121"/>
    </location>
</feature>
<feature type="active site" description="Nucleophile" evidence="4 5">
    <location>
        <position position="183"/>
    </location>
</feature>
<feature type="active site" description="Proton acceptor" evidence="4 5">
    <location>
        <position position="477"/>
    </location>
</feature>
<feature type="binding site" evidence="3">
    <location>
        <position position="6"/>
    </location>
    <ligand>
        <name>Zn(2+)</name>
        <dbReference type="ChEBI" id="CHEBI:29105"/>
        <label>1</label>
    </ligand>
</feature>
<feature type="binding site" evidence="3">
    <location>
        <position position="8"/>
    </location>
    <ligand>
        <name>Zn(2+)</name>
        <dbReference type="ChEBI" id="CHEBI:29105"/>
        <label>1</label>
    </ligand>
</feature>
<feature type="binding site" evidence="3">
    <location>
        <position position="46"/>
    </location>
    <ligand>
        <name>Zn(2+)</name>
        <dbReference type="ChEBI" id="CHEBI:29105"/>
        <label>2</label>
    </ligand>
</feature>
<feature type="binding site" evidence="3">
    <location>
        <position position="49"/>
    </location>
    <ligand>
        <name>Zn(2+)</name>
        <dbReference type="ChEBI" id="CHEBI:29105"/>
        <label>2</label>
    </ligand>
</feature>
<feature type="binding site" evidence="3">
    <location>
        <position position="59"/>
    </location>
    <ligand>
        <name>Zn(2+)</name>
        <dbReference type="ChEBI" id="CHEBI:29105"/>
        <label>3</label>
    </ligand>
</feature>
<feature type="binding site" evidence="3">
    <location>
        <position position="62"/>
    </location>
    <ligand>
        <name>Zn(2+)</name>
        <dbReference type="ChEBI" id="CHEBI:29105"/>
        <label>3</label>
    </ligand>
</feature>
<feature type="binding site" evidence="3">
    <location>
        <position position="67"/>
    </location>
    <ligand>
        <name>Zn(2+)</name>
        <dbReference type="ChEBI" id="CHEBI:29105"/>
        <label>2</label>
    </ligand>
</feature>
<feature type="binding site" evidence="3">
    <location>
        <position position="72"/>
    </location>
    <ligand>
        <name>Zn(2+)</name>
        <dbReference type="ChEBI" id="CHEBI:29105"/>
        <label>2</label>
    </ligand>
</feature>
<feature type="binding site" evidence="3">
    <location>
        <position position="76"/>
    </location>
    <ligand>
        <name>Zn(2+)</name>
        <dbReference type="ChEBI" id="CHEBI:29105"/>
        <label>3</label>
    </ligand>
</feature>
<feature type="binding site" evidence="3">
    <location>
        <position position="82"/>
    </location>
    <ligand>
        <name>Zn(2+)</name>
        <dbReference type="ChEBI" id="CHEBI:29105"/>
        <label>3</label>
    </ligand>
</feature>
<feature type="binding site" evidence="3">
    <location>
        <position position="95"/>
    </location>
    <ligand>
        <name>Zn(2+)</name>
        <dbReference type="ChEBI" id="CHEBI:29105"/>
        <label>1</label>
    </ligand>
</feature>
<feature type="binding site" evidence="3">
    <location>
        <position position="98"/>
    </location>
    <ligand>
        <name>Zn(2+)</name>
        <dbReference type="ChEBI" id="CHEBI:29105"/>
        <label>1</label>
    </ligand>
</feature>